<sequence length="75" mass="8845">MARYFRRRKFCRFTAEGVAEIDYKDIVTLKNYITESGKIVPSRITGTSAKYQRQLARAIKRARYLSLLPYTDLHQ</sequence>
<accession>A0KT22</accession>
<name>RS18_SHESA</name>
<dbReference type="EMBL" id="CP000469">
    <property type="protein sequence ID" value="ABK46941.1"/>
    <property type="molecule type" value="Genomic_DNA"/>
</dbReference>
<dbReference type="RefSeq" id="WP_006083042.1">
    <property type="nucleotide sequence ID" value="NC_008577.1"/>
</dbReference>
<dbReference type="SMR" id="A0KT22"/>
<dbReference type="STRING" id="94122.Shewana3_0703"/>
<dbReference type="GeneID" id="94726693"/>
<dbReference type="KEGG" id="shn:Shewana3_0703"/>
<dbReference type="eggNOG" id="COG0238">
    <property type="taxonomic scope" value="Bacteria"/>
</dbReference>
<dbReference type="HOGENOM" id="CLU_148710_2_3_6"/>
<dbReference type="OrthoDB" id="9812008at2"/>
<dbReference type="Proteomes" id="UP000002589">
    <property type="component" value="Chromosome"/>
</dbReference>
<dbReference type="GO" id="GO:0022627">
    <property type="term" value="C:cytosolic small ribosomal subunit"/>
    <property type="evidence" value="ECO:0007669"/>
    <property type="project" value="TreeGrafter"/>
</dbReference>
<dbReference type="GO" id="GO:0070181">
    <property type="term" value="F:small ribosomal subunit rRNA binding"/>
    <property type="evidence" value="ECO:0007669"/>
    <property type="project" value="TreeGrafter"/>
</dbReference>
<dbReference type="GO" id="GO:0003735">
    <property type="term" value="F:structural constituent of ribosome"/>
    <property type="evidence" value="ECO:0007669"/>
    <property type="project" value="InterPro"/>
</dbReference>
<dbReference type="GO" id="GO:0006412">
    <property type="term" value="P:translation"/>
    <property type="evidence" value="ECO:0007669"/>
    <property type="project" value="UniProtKB-UniRule"/>
</dbReference>
<dbReference type="FunFam" id="4.10.640.10:FF:000001">
    <property type="entry name" value="30S ribosomal protein S18"/>
    <property type="match status" value="1"/>
</dbReference>
<dbReference type="Gene3D" id="4.10.640.10">
    <property type="entry name" value="Ribosomal protein S18"/>
    <property type="match status" value="1"/>
</dbReference>
<dbReference type="HAMAP" id="MF_00270">
    <property type="entry name" value="Ribosomal_bS18"/>
    <property type="match status" value="1"/>
</dbReference>
<dbReference type="InterPro" id="IPR001648">
    <property type="entry name" value="Ribosomal_bS18"/>
</dbReference>
<dbReference type="InterPro" id="IPR018275">
    <property type="entry name" value="Ribosomal_bS18_CS"/>
</dbReference>
<dbReference type="InterPro" id="IPR036870">
    <property type="entry name" value="Ribosomal_bS18_sf"/>
</dbReference>
<dbReference type="NCBIfam" id="TIGR00165">
    <property type="entry name" value="S18"/>
    <property type="match status" value="1"/>
</dbReference>
<dbReference type="PANTHER" id="PTHR13479">
    <property type="entry name" value="30S RIBOSOMAL PROTEIN S18"/>
    <property type="match status" value="1"/>
</dbReference>
<dbReference type="PANTHER" id="PTHR13479:SF40">
    <property type="entry name" value="SMALL RIBOSOMAL SUBUNIT PROTEIN BS18M"/>
    <property type="match status" value="1"/>
</dbReference>
<dbReference type="Pfam" id="PF01084">
    <property type="entry name" value="Ribosomal_S18"/>
    <property type="match status" value="1"/>
</dbReference>
<dbReference type="PRINTS" id="PR00974">
    <property type="entry name" value="RIBOSOMALS18"/>
</dbReference>
<dbReference type="SUPFAM" id="SSF46911">
    <property type="entry name" value="Ribosomal protein S18"/>
    <property type="match status" value="1"/>
</dbReference>
<dbReference type="PROSITE" id="PS00057">
    <property type="entry name" value="RIBOSOMAL_S18"/>
    <property type="match status" value="1"/>
</dbReference>
<keyword id="KW-0687">Ribonucleoprotein</keyword>
<keyword id="KW-0689">Ribosomal protein</keyword>
<keyword id="KW-0694">RNA-binding</keyword>
<keyword id="KW-0699">rRNA-binding</keyword>
<organism>
    <name type="scientific">Shewanella sp. (strain ANA-3)</name>
    <dbReference type="NCBI Taxonomy" id="94122"/>
    <lineage>
        <taxon>Bacteria</taxon>
        <taxon>Pseudomonadati</taxon>
        <taxon>Pseudomonadota</taxon>
        <taxon>Gammaproteobacteria</taxon>
        <taxon>Alteromonadales</taxon>
        <taxon>Shewanellaceae</taxon>
        <taxon>Shewanella</taxon>
    </lineage>
</organism>
<comment type="function">
    <text evidence="1">Binds as a heterodimer with protein bS6 to the central domain of the 16S rRNA, where it helps stabilize the platform of the 30S subunit.</text>
</comment>
<comment type="subunit">
    <text evidence="1">Part of the 30S ribosomal subunit. Forms a tight heterodimer with protein bS6.</text>
</comment>
<comment type="similarity">
    <text evidence="1">Belongs to the bacterial ribosomal protein bS18 family.</text>
</comment>
<evidence type="ECO:0000255" key="1">
    <source>
        <dbReference type="HAMAP-Rule" id="MF_00270"/>
    </source>
</evidence>
<evidence type="ECO:0000305" key="2"/>
<feature type="chain" id="PRO_1000003606" description="Small ribosomal subunit protein bS18">
    <location>
        <begin position="1"/>
        <end position="75"/>
    </location>
</feature>
<gene>
    <name evidence="1" type="primary">rpsR</name>
    <name type="ordered locus">Shewana3_0703</name>
</gene>
<reference key="1">
    <citation type="submission" date="2006-09" db="EMBL/GenBank/DDBJ databases">
        <title>Complete sequence of chromosome 1 of Shewanella sp. ANA-3.</title>
        <authorList>
            <person name="Copeland A."/>
            <person name="Lucas S."/>
            <person name="Lapidus A."/>
            <person name="Barry K."/>
            <person name="Detter J.C."/>
            <person name="Glavina del Rio T."/>
            <person name="Hammon N."/>
            <person name="Israni S."/>
            <person name="Dalin E."/>
            <person name="Tice H."/>
            <person name="Pitluck S."/>
            <person name="Chertkov O."/>
            <person name="Brettin T."/>
            <person name="Bruce D."/>
            <person name="Han C."/>
            <person name="Tapia R."/>
            <person name="Gilna P."/>
            <person name="Schmutz J."/>
            <person name="Larimer F."/>
            <person name="Land M."/>
            <person name="Hauser L."/>
            <person name="Kyrpides N."/>
            <person name="Kim E."/>
            <person name="Newman D."/>
            <person name="Salticov C."/>
            <person name="Konstantinidis K."/>
            <person name="Klappenback J."/>
            <person name="Tiedje J."/>
            <person name="Richardson P."/>
        </authorList>
    </citation>
    <scope>NUCLEOTIDE SEQUENCE [LARGE SCALE GENOMIC DNA]</scope>
    <source>
        <strain>ANA-3</strain>
    </source>
</reference>
<proteinExistence type="inferred from homology"/>
<protein>
    <recommendedName>
        <fullName evidence="1">Small ribosomal subunit protein bS18</fullName>
    </recommendedName>
    <alternativeName>
        <fullName evidence="2">30S ribosomal protein S18</fullName>
    </alternativeName>
</protein>